<dbReference type="EMBL" id="AF251147">
    <property type="protein sequence ID" value="AAF87226.1"/>
    <property type="molecule type" value="mRNA"/>
</dbReference>
<dbReference type="SMR" id="Q9MZA9"/>
<dbReference type="STRING" id="9940.ENSOARP00000012143"/>
<dbReference type="GlyCosmos" id="Q9MZA9">
    <property type="glycosylation" value="3 sites, No reported glycans"/>
</dbReference>
<dbReference type="PaxDb" id="9940-ENSOARP00000012143"/>
<dbReference type="eggNOG" id="KOG0977">
    <property type="taxonomic scope" value="Eukaryota"/>
</dbReference>
<dbReference type="Proteomes" id="UP000002356">
    <property type="component" value="Unplaced"/>
</dbReference>
<dbReference type="GO" id="GO:0030424">
    <property type="term" value="C:axon"/>
    <property type="evidence" value="ECO:0007669"/>
    <property type="project" value="TreeGrafter"/>
</dbReference>
<dbReference type="GO" id="GO:0005737">
    <property type="term" value="C:cytoplasm"/>
    <property type="evidence" value="ECO:0000250"/>
    <property type="project" value="UniProtKB"/>
</dbReference>
<dbReference type="GO" id="GO:0005882">
    <property type="term" value="C:intermediate filament"/>
    <property type="evidence" value="ECO:0000250"/>
    <property type="project" value="UniProtKB"/>
</dbReference>
<dbReference type="GO" id="GO:0016363">
    <property type="term" value="C:nuclear matrix"/>
    <property type="evidence" value="ECO:0007669"/>
    <property type="project" value="UniProtKB-SubCell"/>
</dbReference>
<dbReference type="GO" id="GO:0005886">
    <property type="term" value="C:plasma membrane"/>
    <property type="evidence" value="ECO:0000250"/>
    <property type="project" value="UniProtKB"/>
</dbReference>
<dbReference type="GO" id="GO:0005200">
    <property type="term" value="F:structural constituent of cytoskeleton"/>
    <property type="evidence" value="ECO:0007669"/>
    <property type="project" value="TreeGrafter"/>
</dbReference>
<dbReference type="GO" id="GO:0071222">
    <property type="term" value="P:cellular response to lipopolysaccharide"/>
    <property type="evidence" value="ECO:0000250"/>
    <property type="project" value="UniProtKB"/>
</dbReference>
<dbReference type="GO" id="GO:0071225">
    <property type="term" value="P:cellular response to muramyl dipeptide"/>
    <property type="evidence" value="ECO:0000250"/>
    <property type="project" value="UniProtKB"/>
</dbReference>
<dbReference type="GO" id="GO:0045109">
    <property type="term" value="P:intermediate filament organization"/>
    <property type="evidence" value="ECO:0000250"/>
    <property type="project" value="UniProtKB"/>
</dbReference>
<dbReference type="GO" id="GO:0010634">
    <property type="term" value="P:positive regulation of epithelial cell migration"/>
    <property type="evidence" value="ECO:0000250"/>
    <property type="project" value="UniProtKB"/>
</dbReference>
<dbReference type="InterPro" id="IPR039008">
    <property type="entry name" value="IF_rod_dom"/>
</dbReference>
<dbReference type="InterPro" id="IPR006821">
    <property type="entry name" value="Intermed_filament_DNA-bd"/>
</dbReference>
<dbReference type="InterPro" id="IPR050405">
    <property type="entry name" value="Intermediate_filament"/>
</dbReference>
<dbReference type="PANTHER" id="PTHR45652">
    <property type="entry name" value="GLIAL FIBRILLARY ACIDIC PROTEIN"/>
    <property type="match status" value="1"/>
</dbReference>
<dbReference type="PANTHER" id="PTHR45652:SF5">
    <property type="entry name" value="VIMENTIN"/>
    <property type="match status" value="1"/>
</dbReference>
<dbReference type="Pfam" id="PF00038">
    <property type="entry name" value="Filament"/>
    <property type="match status" value="1"/>
</dbReference>
<dbReference type="Pfam" id="PF04732">
    <property type="entry name" value="Filament_head"/>
    <property type="match status" value="1"/>
</dbReference>
<dbReference type="SUPFAM" id="SSF64593">
    <property type="entry name" value="Intermediate filament protein, coiled coil region"/>
    <property type="match status" value="1"/>
</dbReference>
<dbReference type="PROSITE" id="PS51842">
    <property type="entry name" value="IF_ROD_2"/>
    <property type="match status" value="1"/>
</dbReference>
<accession>Q9MZA9</accession>
<reference evidence="8" key="1">
    <citation type="submission" date="2000-03" db="EMBL/GenBank/DDBJ databases">
        <title>Growth factor expression in ovine fetal placental artery endothelial cells.</title>
        <authorList>
            <person name="Zheng J."/>
            <person name="Tsoi S.C."/>
            <person name="Magness R.R."/>
        </authorList>
    </citation>
    <scope>NUCLEOTIDE SEQUENCE [MRNA]</scope>
    <source>
        <tissue>Placenta</tissue>
    </source>
</reference>
<feature type="initiator methionine" description="Removed" evidence="3">
    <location>
        <position position="1"/>
    </location>
</feature>
<feature type="chain" id="PRO_0000063760" description="Vimentin">
    <location>
        <begin position="2"/>
        <end position="154" status="greater than"/>
    </location>
</feature>
<feature type="domain" description="IF rod" evidence="6">
    <location>
        <begin position="103"/>
        <end position="154" status="greater than"/>
    </location>
</feature>
<feature type="region of interest" description="Disordered" evidence="7">
    <location>
        <begin position="1"/>
        <end position="31"/>
    </location>
</feature>
<feature type="region of interest" description="Head">
    <location>
        <begin position="2"/>
        <end position="95"/>
    </location>
</feature>
<feature type="region of interest" description="Coil 1A">
    <location>
        <begin position="96"/>
        <end position="131"/>
    </location>
</feature>
<feature type="region of interest" description="Linker 1">
    <location>
        <begin position="132"/>
        <end position="153"/>
    </location>
</feature>
<feature type="region of interest" description="Coil 1B">
    <location>
        <begin position="154"/>
        <end position="154" status="greater than"/>
    </location>
</feature>
<feature type="coiled-coil region">
    <location>
        <begin position="96"/>
        <end position="131"/>
    </location>
</feature>
<feature type="compositionally biased region" description="Low complexity" evidence="7">
    <location>
        <begin position="1"/>
        <end position="13"/>
    </location>
</feature>
<feature type="modified residue" description="N-acetylserine" evidence="3">
    <location>
        <position position="2"/>
    </location>
</feature>
<feature type="modified residue" description="Phosphoserine" evidence="3">
    <location>
        <position position="5"/>
    </location>
</feature>
<feature type="modified residue" description="Phosphoserine; by PKA and PKC; alternate" evidence="3">
    <location>
        <position position="7"/>
    </location>
</feature>
<feature type="modified residue" description="Phosphoserine" evidence="3">
    <location>
        <position position="8"/>
    </location>
</feature>
<feature type="modified residue" description="Phosphoserine; by PKC" evidence="3">
    <location>
        <position position="9"/>
    </location>
</feature>
<feature type="modified residue" description="Phosphoserine; by PKC" evidence="3">
    <location>
        <position position="10"/>
    </location>
</feature>
<feature type="modified residue" description="Phosphothreonine" evidence="3">
    <location>
        <position position="20"/>
    </location>
</feature>
<feature type="modified residue" description="Phosphoserine; by PKA and PKC" evidence="4">
    <location>
        <position position="25"/>
    </location>
</feature>
<feature type="modified residue" description="Phosphoserine; by PKC" evidence="4">
    <location>
        <position position="26"/>
    </location>
</feature>
<feature type="modified residue" description="Phosphoserine; by PKC; alternate" evidence="3">
    <location>
        <position position="34"/>
    </location>
</feature>
<feature type="modified residue" description="Phosphoserine; by CaMK2, PKA, PKC and ROCK2" evidence="3">
    <location>
        <position position="39"/>
    </location>
</feature>
<feature type="modified residue" description="Phosphoserine; by PKC" evidence="3">
    <location>
        <position position="42"/>
    </location>
</feature>
<feature type="modified residue" description="Phosphoserine" evidence="3">
    <location>
        <position position="49"/>
    </location>
</feature>
<feature type="modified residue" description="Phosphotyrosine" evidence="4">
    <location>
        <position position="53"/>
    </location>
</feature>
<feature type="modified residue" description="Phosphoserine" evidence="5">
    <location>
        <position position="55"/>
    </location>
</feature>
<feature type="modified residue" description="Phosphoserine; by CDK5 and CDK1" evidence="3">
    <location>
        <position position="56"/>
    </location>
</feature>
<feature type="modified residue" description="Phosphotyrosine" evidence="3">
    <location>
        <position position="61"/>
    </location>
</feature>
<feature type="modified residue" description="Phosphoserine; by PKA and PKC" evidence="4">
    <location>
        <position position="66"/>
    </location>
</feature>
<feature type="modified residue" description="Phosphoserine; by AURKB and ROCK2" evidence="3">
    <location>
        <position position="72"/>
    </location>
</feature>
<feature type="modified residue" description="Phosphoserine; by CaMK2" evidence="4">
    <location>
        <position position="83"/>
    </location>
</feature>
<feature type="modified residue" description="Phosphoserine" evidence="3">
    <location>
        <position position="87"/>
    </location>
</feature>
<feature type="modified residue" description="Phosphotyrosine" evidence="3">
    <location>
        <position position="117"/>
    </location>
</feature>
<feature type="modified residue" description="N6-acetyllysine; alternate" evidence="3">
    <location>
        <position position="120"/>
    </location>
</feature>
<feature type="modified residue" description="N6-succinyllysine; alternate" evidence="4">
    <location>
        <position position="120"/>
    </location>
</feature>
<feature type="modified residue" description="N6-acetyllysine; alternate" evidence="4">
    <location>
        <position position="129"/>
    </location>
</feature>
<feature type="modified residue" description="N6-succinyllysine; alternate" evidence="4">
    <location>
        <position position="129"/>
    </location>
</feature>
<feature type="modified residue" description="N6-acetyllysine; alternate" evidence="3">
    <location>
        <position position="139"/>
    </location>
</feature>
<feature type="modified residue" description="Phosphoserine" evidence="3">
    <location>
        <position position="144"/>
    </location>
</feature>
<feature type="glycosylation site" description="O-linked (GlcNAc) serine; alternate" evidence="1">
    <location>
        <position position="7"/>
    </location>
</feature>
<feature type="glycosylation site" description="O-linked (GlcNAc) threonine" evidence="1">
    <location>
        <position position="33"/>
    </location>
</feature>
<feature type="glycosylation site" description="O-linked (GlcNAc) serine; alternate" evidence="1">
    <location>
        <position position="34"/>
    </location>
</feature>
<feature type="cross-link" description="Glycyl lysine isopeptide (Lys-Gly) (interchain with G-Cter in SUMO2)" evidence="3">
    <location>
        <position position="104"/>
    </location>
</feature>
<feature type="cross-link" description="Glycyl lysine isopeptide (Lys-Gly) (interchain with G-Cter in SUMO2); alternate" evidence="3">
    <location>
        <position position="120"/>
    </location>
</feature>
<feature type="cross-link" description="Glycyl lysine isopeptide (Lys-Gly) (interchain with G-Cter in SUMO2); alternate" evidence="3">
    <location>
        <position position="129"/>
    </location>
</feature>
<feature type="cross-link" description="Glycyl lysine isopeptide (Lys-Gly) (interchain with G-Cter in SUMO2); alternate" evidence="3">
    <location>
        <position position="139"/>
    </location>
</feature>
<feature type="non-terminal residue" evidence="9">
    <location>
        <position position="154"/>
    </location>
</feature>
<evidence type="ECO:0000250" key="1"/>
<evidence type="ECO:0000250" key="2">
    <source>
        <dbReference type="UniProtKB" id="A0A8C0N8E3"/>
    </source>
</evidence>
<evidence type="ECO:0000250" key="3">
    <source>
        <dbReference type="UniProtKB" id="P08670"/>
    </source>
</evidence>
<evidence type="ECO:0000250" key="4">
    <source>
        <dbReference type="UniProtKB" id="P20152"/>
    </source>
</evidence>
<evidence type="ECO:0000250" key="5">
    <source>
        <dbReference type="UniProtKB" id="P31000"/>
    </source>
</evidence>
<evidence type="ECO:0000255" key="6">
    <source>
        <dbReference type="PROSITE-ProRule" id="PRU01188"/>
    </source>
</evidence>
<evidence type="ECO:0000256" key="7">
    <source>
        <dbReference type="SAM" id="MobiDB-lite"/>
    </source>
</evidence>
<evidence type="ECO:0000305" key="8"/>
<evidence type="ECO:0000312" key="9">
    <source>
        <dbReference type="EMBL" id="AAF87226.1"/>
    </source>
</evidence>
<comment type="function">
    <text evidence="2 5">Vimentins are class-III intermediate filaments found in various non-epithelial cells, especially mesenchymal cells. Vimentin is attached to the nucleus, endoplasmic reticulum, and mitochondria, either laterally or terminally. Plays a role in cell directional movement, orientation, cell sheet organization and Golgi complex polarization at the cell migration front (By similarity). Protects SCRIB from proteasomal degradation and facilitates its localization to intermediate filaments in a cell contact-mediated manner (By similarity).</text>
</comment>
<comment type="function">
    <text evidence="3">Involved with LARP6 in the stabilization of type I collagen mRNAs for CO1A1 and CO1A2.</text>
</comment>
<comment type="subunit">
    <text evidence="3 4 5">Homomer assembled from elementary dimers (By similarity). Identified in complexes that contain VIM, EZR, AHNAK, BFSP1, BFSP2, ANK2, PLEC, PRX and spectrin (By similarity). Interacts with BCAS3 (By similarity). Interacts with LGSN (By similarity). Interacts with SYNM (By similarity). Interacts (via rod region) with PLEC (via CH 1 domain) (By similarity). Interacts with STK33 (By similarity). Interacts with LARP6 (By similarity). Interacts with RAB8B (By similarity). Interacts with TOR1A; the interaction associates TOR1A with the cytoskeleton. Interacts with TOR1AIP1 (By similarity). Interacts with TOR1AIP1 (By similarity). Interacts with DIAPH1 (By similarity). Interacts with EPPK1; interaction is dependent of higher-order structure of intermediate filament (By similarity). Interacts with the non-receptor tyrosine kinase SRMS; the interaction leads to phosphorylation of VIM (By similarity). Interacts with NOD2 (By similarity). Interacts (via head region) with CORO1C (By similarity). Interacts with HDGF (By similarity). Interacts with PRKCE (via phorbol-ester/DAG-type 2 domain) (By similarity). Interacts with BFSP2 (By similarity). Interacts with PPL (By similarity). Interacts with PKP1 and PKP2 (By similarity). Interacts with SCRIB (via PDZ domains); the interaction protects SCRIB from proteasomal degradation and facilitates SCRIB localization to intermediate filaments, the interaction is reduced by cell contact inhibition (By similarity).</text>
</comment>
<comment type="subcellular location">
    <subcellularLocation>
        <location evidence="3">Cytoplasm</location>
    </subcellularLocation>
    <subcellularLocation>
        <location evidence="3">Cytoplasm</location>
        <location evidence="3">Cytoskeleton</location>
    </subcellularLocation>
    <subcellularLocation>
        <location evidence="5">Nucleus matrix</location>
    </subcellularLocation>
    <subcellularLocation>
        <location evidence="4">Cell membrane</location>
    </subcellularLocation>
</comment>
<comment type="domain">
    <text evidence="3">The central alpha-helical coiled-coil IF rod domain mediates elementary homodimerization.</text>
</comment>
<comment type="PTM">
    <text evidence="3 5">One of the most prominent phosphoproteins in various cells of mesenchymal origin. Phosphorylation is enhanced during cell division, at which time vimentin filaments are significantly reorganized. Phosphorylation by PKN1 inhibits the formation of filaments. Filament disassembly during mitosis is promoted by phosphorylation at Ser-55 as well as by nestin. Phosphorylated at Ser-56 by CDK5 during neutrophil secretion in the cytoplasm. Phosphorylated by STK33. Phosphorylated on tyrosine residues by SRMS.</text>
</comment>
<comment type="similarity">
    <text evidence="6">Belongs to the intermediate filament family.</text>
</comment>
<name>VIME_SHEEP</name>
<proteinExistence type="evidence at transcript level"/>
<keyword id="KW-0007">Acetylation</keyword>
<keyword id="KW-1003">Cell membrane</keyword>
<keyword id="KW-0175">Coiled coil</keyword>
<keyword id="KW-0963">Cytoplasm</keyword>
<keyword id="KW-0206">Cytoskeleton</keyword>
<keyword id="KW-0325">Glycoprotein</keyword>
<keyword id="KW-0403">Intermediate filament</keyword>
<keyword id="KW-1017">Isopeptide bond</keyword>
<keyword id="KW-0472">Membrane</keyword>
<keyword id="KW-0539">Nucleus</keyword>
<keyword id="KW-0597">Phosphoprotein</keyword>
<keyword id="KW-1185">Reference proteome</keyword>
<keyword id="KW-0832">Ubl conjugation</keyword>
<protein>
    <recommendedName>
        <fullName>Vimentin</fullName>
    </recommendedName>
</protein>
<organism evidence="9">
    <name type="scientific">Ovis aries</name>
    <name type="common">Sheep</name>
    <dbReference type="NCBI Taxonomy" id="9940"/>
    <lineage>
        <taxon>Eukaryota</taxon>
        <taxon>Metazoa</taxon>
        <taxon>Chordata</taxon>
        <taxon>Craniata</taxon>
        <taxon>Vertebrata</taxon>
        <taxon>Euteleostomi</taxon>
        <taxon>Mammalia</taxon>
        <taxon>Eutheria</taxon>
        <taxon>Laurasiatheria</taxon>
        <taxon>Artiodactyla</taxon>
        <taxon>Ruminantia</taxon>
        <taxon>Pecora</taxon>
        <taxon>Bovidae</taxon>
        <taxon>Caprinae</taxon>
        <taxon>Ovis</taxon>
    </lineage>
</organism>
<gene>
    <name type="primary">VIM</name>
</gene>
<sequence>MSTRSVSSSSYRRMFGGPGTASRPSSTRSYVTTSTRTYSLGSALRPTTSRTLYTSSPGGVYATRSSAVRLRSGVPGVRLLQDSVDFSLADAINTEFKNTRTNEKVELQELNDRFANYIDKVRFLEQQNKILLAELEQLKGQGKSRLGHLYEEEM</sequence>